<evidence type="ECO:0000255" key="1">
    <source>
        <dbReference type="HAMAP-Rule" id="MF_01503"/>
    </source>
</evidence>
<name>Y3613_BACHK</name>
<accession>Q6HEU3</accession>
<gene>
    <name type="ordered locus">BT9727_3613</name>
</gene>
<feature type="chain" id="PRO_0000050224" description="Putative regulatory protein BT9727_3613">
    <location>
        <begin position="1"/>
        <end position="87"/>
    </location>
</feature>
<protein>
    <recommendedName>
        <fullName evidence="1">Putative regulatory protein BT9727_3613</fullName>
    </recommendedName>
</protein>
<proteinExistence type="inferred from homology"/>
<reference key="1">
    <citation type="journal article" date="2006" name="J. Bacteriol.">
        <title>Pathogenomic sequence analysis of Bacillus cereus and Bacillus thuringiensis isolates closely related to Bacillus anthracis.</title>
        <authorList>
            <person name="Han C.S."/>
            <person name="Xie G."/>
            <person name="Challacombe J.F."/>
            <person name="Altherr M.R."/>
            <person name="Bhotika S.S."/>
            <person name="Bruce D."/>
            <person name="Campbell C.S."/>
            <person name="Campbell M.L."/>
            <person name="Chen J."/>
            <person name="Chertkov O."/>
            <person name="Cleland C."/>
            <person name="Dimitrijevic M."/>
            <person name="Doggett N.A."/>
            <person name="Fawcett J.J."/>
            <person name="Glavina T."/>
            <person name="Goodwin L.A."/>
            <person name="Hill K.K."/>
            <person name="Hitchcock P."/>
            <person name="Jackson P.J."/>
            <person name="Keim P."/>
            <person name="Kewalramani A.R."/>
            <person name="Longmire J."/>
            <person name="Lucas S."/>
            <person name="Malfatti S."/>
            <person name="McMurry K."/>
            <person name="Meincke L.J."/>
            <person name="Misra M."/>
            <person name="Moseman B.L."/>
            <person name="Mundt M."/>
            <person name="Munk A.C."/>
            <person name="Okinaka R.T."/>
            <person name="Parson-Quintana B."/>
            <person name="Reilly L.P."/>
            <person name="Richardson P."/>
            <person name="Robinson D.L."/>
            <person name="Rubin E."/>
            <person name="Saunders E."/>
            <person name="Tapia R."/>
            <person name="Tesmer J.G."/>
            <person name="Thayer N."/>
            <person name="Thompson L.S."/>
            <person name="Tice H."/>
            <person name="Ticknor L.O."/>
            <person name="Wills P.L."/>
            <person name="Brettin T.S."/>
            <person name="Gilna P."/>
        </authorList>
    </citation>
    <scope>NUCLEOTIDE SEQUENCE [LARGE SCALE GENOMIC DNA]</scope>
    <source>
        <strain>97-27</strain>
    </source>
</reference>
<dbReference type="EMBL" id="AE017355">
    <property type="protein sequence ID" value="AAT61605.1"/>
    <property type="molecule type" value="Genomic_DNA"/>
</dbReference>
<dbReference type="RefSeq" id="YP_037933.1">
    <property type="nucleotide sequence ID" value="NC_005957.1"/>
</dbReference>
<dbReference type="SMR" id="Q6HEU3"/>
<dbReference type="KEGG" id="btk:BT9727_3613"/>
<dbReference type="PATRIC" id="fig|281309.8.peg.3851"/>
<dbReference type="HOGENOM" id="CLU_165326_0_0_9"/>
<dbReference type="PRO" id="PR:Q6HEU3"/>
<dbReference type="Proteomes" id="UP000001301">
    <property type="component" value="Chromosome"/>
</dbReference>
<dbReference type="HAMAP" id="MF_01503">
    <property type="entry name" value="RemA"/>
    <property type="match status" value="1"/>
</dbReference>
<dbReference type="InterPro" id="IPR007169">
    <property type="entry name" value="RemA-like"/>
</dbReference>
<dbReference type="NCBIfam" id="NF046064">
    <property type="entry name" value="MtxBflmRegRemA"/>
    <property type="match status" value="1"/>
</dbReference>
<dbReference type="NCBIfam" id="NF003315">
    <property type="entry name" value="PRK04323.1"/>
    <property type="match status" value="1"/>
</dbReference>
<dbReference type="PANTHER" id="PTHR38449:SF1">
    <property type="entry name" value="REGULATORY PROTEIN SSL2874-RELATED"/>
    <property type="match status" value="1"/>
</dbReference>
<dbReference type="PANTHER" id="PTHR38449">
    <property type="entry name" value="REGULATORY PROTEIN TM_1690-RELATED"/>
    <property type="match status" value="1"/>
</dbReference>
<dbReference type="Pfam" id="PF04025">
    <property type="entry name" value="RemA-like"/>
    <property type="match status" value="1"/>
</dbReference>
<organism>
    <name type="scientific">Bacillus thuringiensis subsp. konkukian (strain 97-27)</name>
    <dbReference type="NCBI Taxonomy" id="281309"/>
    <lineage>
        <taxon>Bacteria</taxon>
        <taxon>Bacillati</taxon>
        <taxon>Bacillota</taxon>
        <taxon>Bacilli</taxon>
        <taxon>Bacillales</taxon>
        <taxon>Bacillaceae</taxon>
        <taxon>Bacillus</taxon>
        <taxon>Bacillus cereus group</taxon>
    </lineage>
</organism>
<comment type="similarity">
    <text evidence="1">Belongs to the RemA family.</text>
</comment>
<sequence length="87" mass="9647">MAMRFLNIGYGNIVSAHRIIAIVSPESAPIKRTVQEAREHNALLDATYGRKTRAVIVMDDGHVVLSPIQPETIAHRLNNKEDLSEEG</sequence>